<organism>
    <name type="scientific">Trichosurus vulpecula</name>
    <name type="common">Brush-tailed possum</name>
    <dbReference type="NCBI Taxonomy" id="9337"/>
    <lineage>
        <taxon>Eukaryota</taxon>
        <taxon>Metazoa</taxon>
        <taxon>Chordata</taxon>
        <taxon>Craniata</taxon>
        <taxon>Vertebrata</taxon>
        <taxon>Euteleostomi</taxon>
        <taxon>Mammalia</taxon>
        <taxon>Metatheria</taxon>
        <taxon>Diprotodontia</taxon>
        <taxon>Phalangeridae</taxon>
        <taxon>Trichosurus</taxon>
    </lineage>
</organism>
<protein>
    <recommendedName>
        <fullName>Prolactin</fullName>
        <shortName>PRL</shortName>
    </recommendedName>
</protein>
<dbReference type="EMBL" id="AF054634">
    <property type="protein sequence ID" value="AAC12736.1"/>
    <property type="molecule type" value="mRNA"/>
</dbReference>
<dbReference type="SMR" id="O62781"/>
<dbReference type="GO" id="GO:0005615">
    <property type="term" value="C:extracellular space"/>
    <property type="evidence" value="ECO:0007669"/>
    <property type="project" value="TreeGrafter"/>
</dbReference>
<dbReference type="GO" id="GO:0005179">
    <property type="term" value="F:hormone activity"/>
    <property type="evidence" value="ECO:0007669"/>
    <property type="project" value="UniProtKB-KW"/>
</dbReference>
<dbReference type="GO" id="GO:0005148">
    <property type="term" value="F:prolactin receptor binding"/>
    <property type="evidence" value="ECO:0007669"/>
    <property type="project" value="TreeGrafter"/>
</dbReference>
<dbReference type="GO" id="GO:0007565">
    <property type="term" value="P:female pregnancy"/>
    <property type="evidence" value="ECO:0007669"/>
    <property type="project" value="TreeGrafter"/>
</dbReference>
<dbReference type="GO" id="GO:0007595">
    <property type="term" value="P:lactation"/>
    <property type="evidence" value="ECO:0007669"/>
    <property type="project" value="UniProtKB-KW"/>
</dbReference>
<dbReference type="GO" id="GO:0008284">
    <property type="term" value="P:positive regulation of cell population proliferation"/>
    <property type="evidence" value="ECO:0007669"/>
    <property type="project" value="TreeGrafter"/>
</dbReference>
<dbReference type="GO" id="GO:1903489">
    <property type="term" value="P:positive regulation of lactation"/>
    <property type="evidence" value="ECO:0007669"/>
    <property type="project" value="TreeGrafter"/>
</dbReference>
<dbReference type="GO" id="GO:0046427">
    <property type="term" value="P:positive regulation of receptor signaling pathway via JAK-STAT"/>
    <property type="evidence" value="ECO:0007669"/>
    <property type="project" value="TreeGrafter"/>
</dbReference>
<dbReference type="GO" id="GO:0031667">
    <property type="term" value="P:response to nutrient levels"/>
    <property type="evidence" value="ECO:0007669"/>
    <property type="project" value="TreeGrafter"/>
</dbReference>
<dbReference type="CDD" id="cd10288">
    <property type="entry name" value="prolactin_like"/>
    <property type="match status" value="1"/>
</dbReference>
<dbReference type="FunFam" id="1.20.1250.10:FF:000003">
    <property type="entry name" value="Prolactin"/>
    <property type="match status" value="1"/>
</dbReference>
<dbReference type="Gene3D" id="1.20.1250.10">
    <property type="match status" value="1"/>
</dbReference>
<dbReference type="InterPro" id="IPR009079">
    <property type="entry name" value="4_helix_cytokine-like_core"/>
</dbReference>
<dbReference type="InterPro" id="IPR001400">
    <property type="entry name" value="Somatotropin/Prolactin"/>
</dbReference>
<dbReference type="InterPro" id="IPR018116">
    <property type="entry name" value="Somatotropin_CS"/>
</dbReference>
<dbReference type="PANTHER" id="PTHR11417:SF5">
    <property type="entry name" value="PROLACTIN"/>
    <property type="match status" value="1"/>
</dbReference>
<dbReference type="PANTHER" id="PTHR11417">
    <property type="entry name" value="SOMATOTROPIN,PROLACTIN"/>
    <property type="match status" value="1"/>
</dbReference>
<dbReference type="Pfam" id="PF00103">
    <property type="entry name" value="Hormone_1"/>
    <property type="match status" value="1"/>
</dbReference>
<dbReference type="PRINTS" id="PR00836">
    <property type="entry name" value="SOMATOTROPIN"/>
</dbReference>
<dbReference type="SUPFAM" id="SSF47266">
    <property type="entry name" value="4-helical cytokines"/>
    <property type="match status" value="1"/>
</dbReference>
<dbReference type="PROSITE" id="PS00266">
    <property type="entry name" value="SOMATOTROPIN_1"/>
    <property type="match status" value="1"/>
</dbReference>
<dbReference type="PROSITE" id="PS00338">
    <property type="entry name" value="SOMATOTROPIN_2"/>
    <property type="match status" value="1"/>
</dbReference>
<evidence type="ECO:0000250" key="1"/>
<evidence type="ECO:0000250" key="2">
    <source>
        <dbReference type="UniProtKB" id="P01236"/>
    </source>
</evidence>
<evidence type="ECO:0000250" key="3">
    <source>
        <dbReference type="UniProtKB" id="P01239"/>
    </source>
</evidence>
<evidence type="ECO:0000305" key="4"/>
<proteinExistence type="evidence at transcript level"/>
<reference key="1">
    <citation type="journal article" date="1998" name="Gen. Comp. Endocrinol.">
        <title>Cloning and sequence analysis of a pituitary prolactin cDNA from the brushtail possum (Trichosurus vulpecula).</title>
        <authorList>
            <person name="Curlewis J.D."/>
            <person name="Saunders M.C."/>
            <person name="Kuang J."/>
            <person name="Harrison G.A."/>
            <person name="Cooper D.W."/>
        </authorList>
    </citation>
    <scope>NUCLEOTIDE SEQUENCE [MRNA]</scope>
</reference>
<sequence>MGTKRSSLKGSLLLLLLMSSLFLFKSVESLPICPSGAVNCQVSLSDLFDRAVMLSHYIHSPSSEMFNEFDERYAQGRGFITKAINSCHTSSLSTPEDKEQAQQIHHEDLLNLILRVLRSWNDPLYHLVTEVRSMQEAPDTILSKAMEIEEQNKRLLEGMEKIVGQVHPGDRENEVYSVWSGLPSLQMADEDTRLFAFYNLLHCLRRDSHKIDNYLKLLKCRLIHDSNC</sequence>
<keyword id="KW-1015">Disulfide bond</keyword>
<keyword id="KW-0372">Hormone</keyword>
<keyword id="KW-0421">Lactation</keyword>
<keyword id="KW-0597">Phosphoprotein</keyword>
<keyword id="KW-0964">Secreted</keyword>
<keyword id="KW-0732">Signal</keyword>
<feature type="signal peptide" evidence="1">
    <location>
        <begin position="1"/>
        <end position="29"/>
    </location>
</feature>
<feature type="chain" id="PRO_0000032927" description="Prolactin">
    <location>
        <begin position="30"/>
        <end position="228"/>
    </location>
</feature>
<feature type="modified residue" description="Phosphoserine" evidence="3">
    <location>
        <position position="55"/>
    </location>
</feature>
<feature type="modified residue" description="Phosphoserine" evidence="3">
    <location>
        <position position="63"/>
    </location>
</feature>
<feature type="modified residue" description="Phosphoserine" evidence="3">
    <location>
        <position position="119"/>
    </location>
</feature>
<feature type="disulfide bond" evidence="1">
    <location>
        <begin position="33"/>
        <end position="40"/>
    </location>
</feature>
<feature type="disulfide bond" evidence="1">
    <location>
        <begin position="87"/>
        <end position="203"/>
    </location>
</feature>
<feature type="disulfide bond" evidence="1">
    <location>
        <begin position="220"/>
        <end position="228"/>
    </location>
</feature>
<accession>O62781</accession>
<name>PRL_TRIVU</name>
<gene>
    <name type="primary">PRL</name>
</gene>
<comment type="function">
    <text>Prolactin acts primarily on the mammary gland by promoting lactation, mammogenesis, mitogenesis and osmoregulation.</text>
</comment>
<comment type="subunit">
    <text evidence="2">Interacts with PRLR.</text>
</comment>
<comment type="subcellular location">
    <subcellularLocation>
        <location>Secreted</location>
    </subcellularLocation>
</comment>
<comment type="similarity">
    <text evidence="4">Belongs to the somatotropin/prolactin family.</text>
</comment>